<keyword id="KW-0028">Amino-acid biosynthesis</keyword>
<keyword id="KW-0963">Cytoplasm</keyword>
<keyword id="KW-0521">NADP</keyword>
<keyword id="KW-0560">Oxidoreductase</keyword>
<keyword id="KW-0641">Proline biosynthesis</keyword>
<keyword id="KW-1185">Reference proteome</keyword>
<feature type="chain" id="PRO_1000193600" description="Gamma-glutamyl phosphate reductase">
    <location>
        <begin position="1"/>
        <end position="415"/>
    </location>
</feature>
<comment type="function">
    <text evidence="1">Catalyzes the NADPH-dependent reduction of L-glutamate 5-phosphate into L-glutamate 5-semialdehyde and phosphate. The product spontaneously undergoes cyclization to form 1-pyrroline-5-carboxylate.</text>
</comment>
<comment type="catalytic activity">
    <reaction evidence="1">
        <text>L-glutamate 5-semialdehyde + phosphate + NADP(+) = L-glutamyl 5-phosphate + NADPH + H(+)</text>
        <dbReference type="Rhea" id="RHEA:19541"/>
        <dbReference type="ChEBI" id="CHEBI:15378"/>
        <dbReference type="ChEBI" id="CHEBI:43474"/>
        <dbReference type="ChEBI" id="CHEBI:57783"/>
        <dbReference type="ChEBI" id="CHEBI:58066"/>
        <dbReference type="ChEBI" id="CHEBI:58274"/>
        <dbReference type="ChEBI" id="CHEBI:58349"/>
        <dbReference type="EC" id="1.2.1.41"/>
    </reaction>
</comment>
<comment type="pathway">
    <text evidence="1">Amino-acid biosynthesis; L-proline biosynthesis; L-glutamate 5-semialdehyde from L-glutamate: step 2/2.</text>
</comment>
<comment type="subcellular location">
    <subcellularLocation>
        <location evidence="1">Cytoplasm</location>
    </subcellularLocation>
</comment>
<comment type="similarity">
    <text evidence="1">Belongs to the gamma-glutamyl phosphate reductase family.</text>
</comment>
<organism>
    <name type="scientific">Dictyoglomus turgidum (strain DSM 6724 / Z-1310)</name>
    <dbReference type="NCBI Taxonomy" id="515635"/>
    <lineage>
        <taxon>Bacteria</taxon>
        <taxon>Pseudomonadati</taxon>
        <taxon>Dictyoglomota</taxon>
        <taxon>Dictyoglomia</taxon>
        <taxon>Dictyoglomales</taxon>
        <taxon>Dictyoglomaceae</taxon>
        <taxon>Dictyoglomus</taxon>
    </lineage>
</organism>
<dbReference type="EC" id="1.2.1.41" evidence="1"/>
<dbReference type="EMBL" id="CP001251">
    <property type="protein sequence ID" value="ACK42577.1"/>
    <property type="molecule type" value="Genomic_DNA"/>
</dbReference>
<dbReference type="RefSeq" id="WP_012583659.1">
    <property type="nucleotide sequence ID" value="NC_011661.1"/>
</dbReference>
<dbReference type="RefSeq" id="YP_002353191.1">
    <property type="nucleotide sequence ID" value="NC_011661.1"/>
</dbReference>
<dbReference type="SMR" id="B8E0D2"/>
<dbReference type="FunCoup" id="B8E0D2">
    <property type="interactions" value="285"/>
</dbReference>
<dbReference type="STRING" id="515635.Dtur_1303"/>
<dbReference type="EnsemblBacteria" id="ACK42577">
    <property type="protein sequence ID" value="ACK42577"/>
    <property type="gene ID" value="Dtur_1303"/>
</dbReference>
<dbReference type="KEGG" id="dtu:Dtur_1303"/>
<dbReference type="PATRIC" id="fig|515635.4.peg.1347"/>
<dbReference type="eggNOG" id="COG0014">
    <property type="taxonomic scope" value="Bacteria"/>
</dbReference>
<dbReference type="HOGENOM" id="CLU_030231_0_0_0"/>
<dbReference type="InParanoid" id="B8E0D2"/>
<dbReference type="OrthoDB" id="9809970at2"/>
<dbReference type="UniPathway" id="UPA00098">
    <property type="reaction ID" value="UER00360"/>
</dbReference>
<dbReference type="Proteomes" id="UP000007719">
    <property type="component" value="Chromosome"/>
</dbReference>
<dbReference type="GO" id="GO:0005737">
    <property type="term" value="C:cytoplasm"/>
    <property type="evidence" value="ECO:0007669"/>
    <property type="project" value="UniProtKB-SubCell"/>
</dbReference>
<dbReference type="GO" id="GO:0004350">
    <property type="term" value="F:glutamate-5-semialdehyde dehydrogenase activity"/>
    <property type="evidence" value="ECO:0000318"/>
    <property type="project" value="GO_Central"/>
</dbReference>
<dbReference type="GO" id="GO:0050661">
    <property type="term" value="F:NADP binding"/>
    <property type="evidence" value="ECO:0007669"/>
    <property type="project" value="InterPro"/>
</dbReference>
<dbReference type="GO" id="GO:0055129">
    <property type="term" value="P:L-proline biosynthetic process"/>
    <property type="evidence" value="ECO:0007669"/>
    <property type="project" value="UniProtKB-UniRule"/>
</dbReference>
<dbReference type="CDD" id="cd07079">
    <property type="entry name" value="ALDH_F18-19_ProA-GPR"/>
    <property type="match status" value="1"/>
</dbReference>
<dbReference type="FunFam" id="3.40.309.10:FF:000006">
    <property type="entry name" value="Gamma-glutamyl phosphate reductase"/>
    <property type="match status" value="1"/>
</dbReference>
<dbReference type="Gene3D" id="3.40.605.10">
    <property type="entry name" value="Aldehyde Dehydrogenase, Chain A, domain 1"/>
    <property type="match status" value="1"/>
</dbReference>
<dbReference type="Gene3D" id="3.40.309.10">
    <property type="entry name" value="Aldehyde Dehydrogenase, Chain A, domain 2"/>
    <property type="match status" value="1"/>
</dbReference>
<dbReference type="HAMAP" id="MF_00412">
    <property type="entry name" value="ProA"/>
    <property type="match status" value="1"/>
</dbReference>
<dbReference type="InterPro" id="IPR016161">
    <property type="entry name" value="Ald_DH/histidinol_DH"/>
</dbReference>
<dbReference type="InterPro" id="IPR016163">
    <property type="entry name" value="Ald_DH_C"/>
</dbReference>
<dbReference type="InterPro" id="IPR016162">
    <property type="entry name" value="Ald_DH_N"/>
</dbReference>
<dbReference type="InterPro" id="IPR015590">
    <property type="entry name" value="Aldehyde_DH_dom"/>
</dbReference>
<dbReference type="InterPro" id="IPR020593">
    <property type="entry name" value="G-glutamylP_reductase_CS"/>
</dbReference>
<dbReference type="InterPro" id="IPR012134">
    <property type="entry name" value="Glu-5-SA_DH"/>
</dbReference>
<dbReference type="InterPro" id="IPR000965">
    <property type="entry name" value="GPR_dom"/>
</dbReference>
<dbReference type="NCBIfam" id="NF001221">
    <property type="entry name" value="PRK00197.1"/>
    <property type="match status" value="1"/>
</dbReference>
<dbReference type="NCBIfam" id="TIGR00407">
    <property type="entry name" value="proA"/>
    <property type="match status" value="1"/>
</dbReference>
<dbReference type="PANTHER" id="PTHR11063:SF8">
    <property type="entry name" value="DELTA-1-PYRROLINE-5-CARBOXYLATE SYNTHASE"/>
    <property type="match status" value="1"/>
</dbReference>
<dbReference type="PANTHER" id="PTHR11063">
    <property type="entry name" value="GLUTAMATE SEMIALDEHYDE DEHYDROGENASE"/>
    <property type="match status" value="1"/>
</dbReference>
<dbReference type="Pfam" id="PF00171">
    <property type="entry name" value="Aldedh"/>
    <property type="match status" value="2"/>
</dbReference>
<dbReference type="PIRSF" id="PIRSF000151">
    <property type="entry name" value="GPR"/>
    <property type="match status" value="1"/>
</dbReference>
<dbReference type="SUPFAM" id="SSF53720">
    <property type="entry name" value="ALDH-like"/>
    <property type="match status" value="1"/>
</dbReference>
<dbReference type="PROSITE" id="PS01223">
    <property type="entry name" value="PROA"/>
    <property type="match status" value="1"/>
</dbReference>
<sequence length="415" mass="46421">MENLIEKLKKAKVSSYTLALLNTNEKNEALRAIANNIEKNIDKIIKENEKDLKRGEEKGLSKAVLDRILLNEKRLRDIIKSIDDVIKLPDPVGEIVSMQKRPNGILVGQMRVPIGVIAIIYEARPNVTVDATILALKSGNAIVLRGSSDALNSNIIITEIMKEALSNTKVPPDTVQIIESPEHSVVEELLQMVDYIDVAIPRGSAKFIKHVMNISKVPVIETGAGNNHIYVEEDADFEMARKIIINAKVQRPSVCNAIEKLLIHKNIAEEFLPIIAKDLREYNVEIRGCKRTLKILTDAIPATEEDWYTEYLDYIIAIKIVESIDEAIEHINKYNTKHSEAIITKDYYKALKFLRMVDAAAVYVNASTRFTDGGEFGLGAEIGISTQKLHARGPMGLKELTTTKYVILGEGQIRE</sequence>
<gene>
    <name evidence="1" type="primary">proA</name>
    <name type="ordered locus">Dtur_1303</name>
</gene>
<reference key="1">
    <citation type="journal article" date="2016" name="Front. Microbiol.">
        <title>The complete genome sequence of hyperthermophile Dictyoglomus turgidum DSM 6724 reveals a specialized carbohydrate fermentor.</title>
        <authorList>
            <person name="Brumm P.J."/>
            <person name="Gowda K."/>
            <person name="Robb F.T."/>
            <person name="Mead D.A."/>
        </authorList>
    </citation>
    <scope>NUCLEOTIDE SEQUENCE [LARGE SCALE GENOMIC DNA]</scope>
    <source>
        <strain>DSM 6724 / Z-1310</strain>
    </source>
</reference>
<proteinExistence type="inferred from homology"/>
<protein>
    <recommendedName>
        <fullName evidence="1">Gamma-glutamyl phosphate reductase</fullName>
        <shortName evidence="1">GPR</shortName>
        <ecNumber evidence="1">1.2.1.41</ecNumber>
    </recommendedName>
    <alternativeName>
        <fullName evidence="1">Glutamate-5-semialdehyde dehydrogenase</fullName>
    </alternativeName>
    <alternativeName>
        <fullName evidence="1">Glutamyl-gamma-semialdehyde dehydrogenase</fullName>
        <shortName evidence="1">GSA dehydrogenase</shortName>
    </alternativeName>
</protein>
<accession>B8E0D2</accession>
<evidence type="ECO:0000255" key="1">
    <source>
        <dbReference type="HAMAP-Rule" id="MF_00412"/>
    </source>
</evidence>
<name>PROA_DICTD</name>